<keyword id="KW-0997">Cell inner membrane</keyword>
<keyword id="KW-1003">Cell membrane</keyword>
<keyword id="KW-0378">Hydrolase</keyword>
<keyword id="KW-0472">Membrane</keyword>
<keyword id="KW-0479">Metal-binding</keyword>
<keyword id="KW-0482">Metalloprotease</keyword>
<keyword id="KW-0645">Protease</keyword>
<keyword id="KW-1185">Reference proteome</keyword>
<keyword id="KW-0812">Transmembrane</keyword>
<keyword id="KW-1133">Transmembrane helix</keyword>
<keyword id="KW-0862">Zinc</keyword>
<gene>
    <name evidence="1" type="primary">htpX</name>
    <name type="ordered locus">ECS88_1882</name>
</gene>
<dbReference type="EC" id="3.4.24.-" evidence="1"/>
<dbReference type="EMBL" id="CU928161">
    <property type="protein sequence ID" value="CAR03188.1"/>
    <property type="molecule type" value="Genomic_DNA"/>
</dbReference>
<dbReference type="RefSeq" id="WP_000984517.1">
    <property type="nucleotide sequence ID" value="NC_011742.1"/>
</dbReference>
<dbReference type="SMR" id="B7MBN6"/>
<dbReference type="MEROPS" id="M48.002"/>
<dbReference type="GeneID" id="93776079"/>
<dbReference type="KEGG" id="ecz:ECS88_1882"/>
<dbReference type="HOGENOM" id="CLU_042266_1_0_6"/>
<dbReference type="Proteomes" id="UP000000747">
    <property type="component" value="Chromosome"/>
</dbReference>
<dbReference type="GO" id="GO:0005886">
    <property type="term" value="C:plasma membrane"/>
    <property type="evidence" value="ECO:0007669"/>
    <property type="project" value="UniProtKB-SubCell"/>
</dbReference>
<dbReference type="GO" id="GO:0004222">
    <property type="term" value="F:metalloendopeptidase activity"/>
    <property type="evidence" value="ECO:0007669"/>
    <property type="project" value="UniProtKB-UniRule"/>
</dbReference>
<dbReference type="GO" id="GO:0008270">
    <property type="term" value="F:zinc ion binding"/>
    <property type="evidence" value="ECO:0007669"/>
    <property type="project" value="UniProtKB-UniRule"/>
</dbReference>
<dbReference type="GO" id="GO:0006508">
    <property type="term" value="P:proteolysis"/>
    <property type="evidence" value="ECO:0007669"/>
    <property type="project" value="UniProtKB-KW"/>
</dbReference>
<dbReference type="CDD" id="cd07335">
    <property type="entry name" value="M48B_HtpX_like"/>
    <property type="match status" value="1"/>
</dbReference>
<dbReference type="FunFam" id="3.30.2010.10:FF:000001">
    <property type="entry name" value="Protease HtpX"/>
    <property type="match status" value="1"/>
</dbReference>
<dbReference type="Gene3D" id="3.30.2010.10">
    <property type="entry name" value="Metalloproteases ('zincins'), catalytic domain"/>
    <property type="match status" value="1"/>
</dbReference>
<dbReference type="HAMAP" id="MF_00188">
    <property type="entry name" value="Pept_M48_protease_HtpX"/>
    <property type="match status" value="1"/>
</dbReference>
<dbReference type="InterPro" id="IPR050083">
    <property type="entry name" value="HtpX_protease"/>
</dbReference>
<dbReference type="InterPro" id="IPR022919">
    <property type="entry name" value="Pept_M48_protease_HtpX"/>
</dbReference>
<dbReference type="InterPro" id="IPR001915">
    <property type="entry name" value="Peptidase_M48"/>
</dbReference>
<dbReference type="NCBIfam" id="NF003965">
    <property type="entry name" value="PRK05457.1"/>
    <property type="match status" value="1"/>
</dbReference>
<dbReference type="PANTHER" id="PTHR43221">
    <property type="entry name" value="PROTEASE HTPX"/>
    <property type="match status" value="1"/>
</dbReference>
<dbReference type="PANTHER" id="PTHR43221:SF1">
    <property type="entry name" value="PROTEASE HTPX"/>
    <property type="match status" value="1"/>
</dbReference>
<dbReference type="Pfam" id="PF01435">
    <property type="entry name" value="Peptidase_M48"/>
    <property type="match status" value="1"/>
</dbReference>
<comment type="cofactor">
    <cofactor evidence="1">
        <name>Zn(2+)</name>
        <dbReference type="ChEBI" id="CHEBI:29105"/>
    </cofactor>
    <text evidence="1">Binds 1 zinc ion per subunit.</text>
</comment>
<comment type="subcellular location">
    <subcellularLocation>
        <location evidence="1">Cell inner membrane</location>
        <topology evidence="1">Multi-pass membrane protein</topology>
    </subcellularLocation>
</comment>
<comment type="similarity">
    <text evidence="1">Belongs to the peptidase M48B family.</text>
</comment>
<organism>
    <name type="scientific">Escherichia coli O45:K1 (strain S88 / ExPEC)</name>
    <dbReference type="NCBI Taxonomy" id="585035"/>
    <lineage>
        <taxon>Bacteria</taxon>
        <taxon>Pseudomonadati</taxon>
        <taxon>Pseudomonadota</taxon>
        <taxon>Gammaproteobacteria</taxon>
        <taxon>Enterobacterales</taxon>
        <taxon>Enterobacteriaceae</taxon>
        <taxon>Escherichia</taxon>
    </lineage>
</organism>
<feature type="chain" id="PRO_1000192740" description="Protease HtpX">
    <location>
        <begin position="1"/>
        <end position="293"/>
    </location>
</feature>
<feature type="transmembrane region" description="Helical" evidence="1">
    <location>
        <begin position="4"/>
        <end position="24"/>
    </location>
</feature>
<feature type="transmembrane region" description="Helical" evidence="1">
    <location>
        <begin position="34"/>
        <end position="54"/>
    </location>
</feature>
<feature type="transmembrane region" description="Helical" evidence="1">
    <location>
        <begin position="158"/>
        <end position="178"/>
    </location>
</feature>
<feature type="transmembrane region" description="Helical" evidence="1">
    <location>
        <begin position="193"/>
        <end position="213"/>
    </location>
</feature>
<feature type="active site" evidence="1">
    <location>
        <position position="140"/>
    </location>
</feature>
<feature type="binding site" evidence="1">
    <location>
        <position position="139"/>
    </location>
    <ligand>
        <name>Zn(2+)</name>
        <dbReference type="ChEBI" id="CHEBI:29105"/>
        <note>catalytic</note>
    </ligand>
</feature>
<feature type="binding site" evidence="1">
    <location>
        <position position="143"/>
    </location>
    <ligand>
        <name>Zn(2+)</name>
        <dbReference type="ChEBI" id="CHEBI:29105"/>
        <note>catalytic</note>
    </ligand>
</feature>
<feature type="binding site" evidence="1">
    <location>
        <position position="222"/>
    </location>
    <ligand>
        <name>Zn(2+)</name>
        <dbReference type="ChEBI" id="CHEBI:29105"/>
        <note>catalytic</note>
    </ligand>
</feature>
<reference key="1">
    <citation type="journal article" date="2009" name="PLoS Genet.">
        <title>Organised genome dynamics in the Escherichia coli species results in highly diverse adaptive paths.</title>
        <authorList>
            <person name="Touchon M."/>
            <person name="Hoede C."/>
            <person name="Tenaillon O."/>
            <person name="Barbe V."/>
            <person name="Baeriswyl S."/>
            <person name="Bidet P."/>
            <person name="Bingen E."/>
            <person name="Bonacorsi S."/>
            <person name="Bouchier C."/>
            <person name="Bouvet O."/>
            <person name="Calteau A."/>
            <person name="Chiapello H."/>
            <person name="Clermont O."/>
            <person name="Cruveiller S."/>
            <person name="Danchin A."/>
            <person name="Diard M."/>
            <person name="Dossat C."/>
            <person name="Karoui M.E."/>
            <person name="Frapy E."/>
            <person name="Garry L."/>
            <person name="Ghigo J.M."/>
            <person name="Gilles A.M."/>
            <person name="Johnson J."/>
            <person name="Le Bouguenec C."/>
            <person name="Lescat M."/>
            <person name="Mangenot S."/>
            <person name="Martinez-Jehanne V."/>
            <person name="Matic I."/>
            <person name="Nassif X."/>
            <person name="Oztas S."/>
            <person name="Petit M.A."/>
            <person name="Pichon C."/>
            <person name="Rouy Z."/>
            <person name="Ruf C.S."/>
            <person name="Schneider D."/>
            <person name="Tourret J."/>
            <person name="Vacherie B."/>
            <person name="Vallenet D."/>
            <person name="Medigue C."/>
            <person name="Rocha E.P.C."/>
            <person name="Denamur E."/>
        </authorList>
    </citation>
    <scope>NUCLEOTIDE SEQUENCE [LARGE SCALE GENOMIC DNA]</scope>
    <source>
        <strain>S88 / ExPEC</strain>
    </source>
</reference>
<accession>B7MBN6</accession>
<name>HTPX_ECO45</name>
<proteinExistence type="inferred from homology"/>
<sequence>MMRIALFLLTNLAVMVVFGLVLSLTGIQSSSVQGLMIMALLFGFGGSFVSLLMSKWMALRSVGGEVIEQPRNERERWLVNTVATQARQAGIAMPQVAIYHAPDINAFATGARRDASLVAVSTGLLQNMSPDEAEAVIAHEISHIANGDMVTMTLIQGVVNTFVIFISRILAQLAAGFMGGNRDEGEESNGNPLIYFAVATVLELVFGILASIITMWFSRHREFHADAGSAKLVGREKMIAALQRLKTSYEPQEATSMMAFCINGKSKSLSELFMTHPPLDKRIEALRTGEYLK</sequence>
<protein>
    <recommendedName>
        <fullName evidence="1">Protease HtpX</fullName>
        <ecNumber evidence="1">3.4.24.-</ecNumber>
    </recommendedName>
    <alternativeName>
        <fullName evidence="1">Heat shock protein HtpX</fullName>
    </alternativeName>
</protein>
<evidence type="ECO:0000255" key="1">
    <source>
        <dbReference type="HAMAP-Rule" id="MF_00188"/>
    </source>
</evidence>